<accession>P40416</accession>
<accession>D6W0C8</accession>
<proteinExistence type="evidence at protein level"/>
<comment type="function">
    <text evidence="6 9 10 11">Performs an essential function in the generation of cytoplasmic iron-sulfur proteins by mediating the ATP-dependent export of Fe/S cluster precursors synthesized by NFS1 and other mitochondrial proteins (PubMed:10406803, PubMed:25006243, PubMed:31040179). Hydrolyzes ATP (PubMed:24604199, PubMed:25006243). Binds glutathione and may function by transporting a glutathione-conjugated iron-sulfur compound (PubMed:24604199, PubMed:25006243, PubMed:31040179).</text>
</comment>
<comment type="biophysicochemical properties">
    <kinetics>
        <KM evidence="10">109 uM for glutathione disulfide</KM>
        <Vmax evidence="10">27.4 pmol/min/mg enzyme</Vmax>
    </kinetics>
</comment>
<comment type="subunit">
    <text evidence="9">Homodimer.</text>
</comment>
<comment type="subcellular location">
    <subcellularLocation>
        <location evidence="9 12">Mitochondrion inner membrane</location>
        <topology evidence="5 9 10 12">Multi-pass membrane protein</topology>
    </subcellularLocation>
</comment>
<comment type="disruption phenotype">
    <text evidence="11">Impairs cytosolic iron-sulfur (Fe-S) cluster assembly and decreases cytosolic tRNA thiolation.</text>
</comment>
<comment type="miscellaneous">
    <text evidence="7">Present with 3250 molecules/cell in log phase SD medium.</text>
</comment>
<comment type="similarity">
    <text evidence="13">Belongs to the ABC transporter superfamily. ABCB family. Heavy Metal importer (TC 3.A.1.210) subfamily.</text>
</comment>
<reference key="1">
    <citation type="journal article" date="1995" name="EMBO J.">
        <title>An ABC transporter in the mitochondrial inner membrane is required for normal growth of yeast.</title>
        <authorList>
            <person name="Leighton J."/>
            <person name="Schatz G."/>
        </authorList>
    </citation>
    <scope>NUCLEOTIDE SEQUENCE [GENOMIC DNA]</scope>
    <scope>SUBCELLULAR LOCATION</scope>
    <scope>TOPOLOGY</scope>
    <source>
        <strain>JK9-3D alpha</strain>
    </source>
</reference>
<reference key="2">
    <citation type="journal article" date="1997" name="FEBS Lett.">
        <title>The ABC transporter Atm1p is required for mitochondrial iron homeostasis.</title>
        <authorList>
            <person name="Kispal G."/>
            <person name="Csere P."/>
            <person name="Guiard B."/>
            <person name="Lill R."/>
        </authorList>
    </citation>
    <scope>NUCLEOTIDE SEQUENCE [GENOMIC DNA]</scope>
</reference>
<reference key="3">
    <citation type="journal article" date="1997" name="Nature">
        <title>The nucleotide sequence of Saccharomyces cerevisiae chromosome XIII.</title>
        <authorList>
            <person name="Bowman S."/>
            <person name="Churcher C.M."/>
            <person name="Badcock K."/>
            <person name="Brown D."/>
            <person name="Chillingworth T."/>
            <person name="Connor R."/>
            <person name="Dedman K."/>
            <person name="Devlin K."/>
            <person name="Gentles S."/>
            <person name="Hamlin N."/>
            <person name="Hunt S."/>
            <person name="Jagels K."/>
            <person name="Lye G."/>
            <person name="Moule S."/>
            <person name="Odell C."/>
            <person name="Pearson D."/>
            <person name="Rajandream M.A."/>
            <person name="Rice P."/>
            <person name="Skelton J."/>
            <person name="Walsh S.V."/>
            <person name="Whitehead S."/>
            <person name="Barrell B.G."/>
        </authorList>
    </citation>
    <scope>NUCLEOTIDE SEQUENCE [LARGE SCALE GENOMIC DNA]</scope>
    <source>
        <strain>ATCC 204508 / S288c</strain>
    </source>
</reference>
<reference key="4">
    <citation type="journal article" date="2014" name="G3 (Bethesda)">
        <title>The reference genome sequence of Saccharomyces cerevisiae: Then and now.</title>
        <authorList>
            <person name="Engel S.R."/>
            <person name="Dietrich F.S."/>
            <person name="Fisk D.G."/>
            <person name="Binkley G."/>
            <person name="Balakrishnan R."/>
            <person name="Costanzo M.C."/>
            <person name="Dwight S.S."/>
            <person name="Hitz B.C."/>
            <person name="Karra K."/>
            <person name="Nash R.S."/>
            <person name="Weng S."/>
            <person name="Wong E.D."/>
            <person name="Lloyd P."/>
            <person name="Skrzypek M.S."/>
            <person name="Miyasato S.R."/>
            <person name="Simison M."/>
            <person name="Cherry J.M."/>
        </authorList>
    </citation>
    <scope>GENOME REANNOTATION</scope>
    <source>
        <strain>ATCC 204508 / S288c</strain>
    </source>
</reference>
<reference key="5">
    <citation type="journal article" date="1999" name="EMBO J.">
        <title>The mitochondrial proteins Atm1p and Nfs1p are essential for biogenesis of cytosolic Fe/S proteins.</title>
        <authorList>
            <person name="Kispal G."/>
            <person name="Csere P."/>
            <person name="Prohl C."/>
            <person name="Lill R."/>
        </authorList>
    </citation>
    <scope>FUNCTION</scope>
</reference>
<reference key="6">
    <citation type="journal article" date="2003" name="Nature">
        <title>Global analysis of protein expression in yeast.</title>
        <authorList>
            <person name="Ghaemmaghami S."/>
            <person name="Huh W.-K."/>
            <person name="Bower K."/>
            <person name="Howson R.W."/>
            <person name="Belle A."/>
            <person name="Dephoure N."/>
            <person name="O'Shea E.K."/>
            <person name="Weissman J.S."/>
        </authorList>
    </citation>
    <scope>LEVEL OF PROTEIN EXPRESSION [LARGE SCALE ANALYSIS]</scope>
</reference>
<reference key="7">
    <citation type="journal article" date="2004" name="FEBS Lett.">
        <title>The mitochondrial ABC transporter Atm1p functions as a homodimer.</title>
        <authorList>
            <person name="Chloupkova M."/>
            <person name="Reaves S.K."/>
            <person name="LeBard L.M."/>
            <person name="Koeller D.M."/>
        </authorList>
    </citation>
    <scope>HOMODIMERIZATION</scope>
    <scope>MUTAGENESIS OF LYS-475 AND GLU-598</scope>
</reference>
<reference key="8">
    <citation type="journal article" date="2014" name="J. Biol. Chem.">
        <title>A conserved mitochondrial ATP-binding cassette transporter exports glutathione polysulfide for cytosolic metal cofactor assembly.</title>
        <authorList>
            <person name="Schaedler T.A."/>
            <person name="Thornton J.D."/>
            <person name="Kruse I."/>
            <person name="Schwarzlaender M."/>
            <person name="Meyer A.J."/>
            <person name="van Veen H.W."/>
            <person name="Balk J."/>
        </authorList>
    </citation>
    <scope>FUNCTION</scope>
    <scope>CATALYTIC ACTIVITY</scope>
    <scope>BIOPHYSICOCHEMICAL PROPERTIES</scope>
    <scope>SUBCELLULAR LOCATION</scope>
    <scope>TOPOLOGY</scope>
    <scope>MUTAGENESIS OF ARG-216 AND LYS-475</scope>
</reference>
<reference key="9">
    <citation type="journal article" date="2019" name="J. Biol. Chem.">
        <title>Mitochondria export iron-sulfur and sulfur intermediates to the cytoplasm for iron-sulfur cluster assembly and tRNA thiolation in yeast.</title>
        <authorList>
            <person name="Pandey A.K."/>
            <person name="Pain J."/>
            <person name="Dancis A."/>
            <person name="Pain D."/>
        </authorList>
    </citation>
    <scope>FUNCTION</scope>
    <scope>DISRUPTION PHENOTYPE</scope>
</reference>
<reference key="10">
    <citation type="journal article" date="2014" name="Science">
        <title>Crystal structures of nucleotide-free and glutathione-bound mitochondrial ABC transporter Atm1.</title>
        <authorList>
            <person name="Srinivasan V."/>
            <person name="Pierik A.J."/>
            <person name="Lill R."/>
        </authorList>
    </citation>
    <scope>X-RAY CRYSTALLOGRAPHY (3.06 ANGSTROMS) OF 98-690 IN COMPLEX WITH GLUTATHIONE</scope>
    <scope>FUNCTION</scope>
    <scope>SUBCELLULAR LOCATION</scope>
    <scope>TOPOLOGY</scope>
    <scope>SUBUNIT</scope>
    <scope>MUTAGENESIS OF 666-LEU--LEU-690</scope>
</reference>
<gene>
    <name evidence="14" type="primary">ATM1</name>
    <name evidence="13" type="synonym">MDY</name>
    <name type="ordered locus">YMR301C</name>
    <name type="ORF">YM9952.03C</name>
</gene>
<keyword id="KW-0002">3D-structure</keyword>
<keyword id="KW-0067">ATP-binding</keyword>
<keyword id="KW-0472">Membrane</keyword>
<keyword id="KW-0496">Mitochondrion</keyword>
<keyword id="KW-0999">Mitochondrion inner membrane</keyword>
<keyword id="KW-0547">Nucleotide-binding</keyword>
<keyword id="KW-1185">Reference proteome</keyword>
<keyword id="KW-0809">Transit peptide</keyword>
<keyword id="KW-1278">Translocase</keyword>
<keyword id="KW-0812">Transmembrane</keyword>
<keyword id="KW-1133">Transmembrane helix</keyword>
<keyword id="KW-0813">Transport</keyword>
<organism>
    <name type="scientific">Saccharomyces cerevisiae (strain ATCC 204508 / S288c)</name>
    <name type="common">Baker's yeast</name>
    <dbReference type="NCBI Taxonomy" id="559292"/>
    <lineage>
        <taxon>Eukaryota</taxon>
        <taxon>Fungi</taxon>
        <taxon>Dikarya</taxon>
        <taxon>Ascomycota</taxon>
        <taxon>Saccharomycotina</taxon>
        <taxon>Saccharomycetes</taxon>
        <taxon>Saccharomycetales</taxon>
        <taxon>Saccharomycetaceae</taxon>
        <taxon>Saccharomyces</taxon>
    </lineage>
</organism>
<protein>
    <recommendedName>
        <fullName evidence="13">Iron-sulfur clusters transporter ATM1, mitochondrial</fullName>
        <ecNumber evidence="10">7.-.-.-</ecNumber>
    </recommendedName>
</protein>
<dbReference type="EC" id="7.-.-.-" evidence="10"/>
<dbReference type="EMBL" id="X82612">
    <property type="protein sequence ID" value="CAA57938.1"/>
    <property type="molecule type" value="Genomic_DNA"/>
</dbReference>
<dbReference type="EMBL" id="X81715">
    <property type="protein sequence ID" value="CAA57359.1"/>
    <property type="molecule type" value="Genomic_DNA"/>
</dbReference>
<dbReference type="EMBL" id="Z49212">
    <property type="protein sequence ID" value="CAA89134.1"/>
    <property type="molecule type" value="Genomic_DNA"/>
</dbReference>
<dbReference type="EMBL" id="BK006946">
    <property type="protein sequence ID" value="DAA10202.1"/>
    <property type="molecule type" value="Genomic_DNA"/>
</dbReference>
<dbReference type="PIR" id="S54211">
    <property type="entry name" value="S54211"/>
</dbReference>
<dbReference type="RefSeq" id="NP_014030.1">
    <property type="nucleotide sequence ID" value="NM_001182810.1"/>
</dbReference>
<dbReference type="PDB" id="4MYC">
    <property type="method" value="X-ray"/>
    <property type="resolution" value="3.06 A"/>
    <property type="chains" value="A/B/C=98-690"/>
</dbReference>
<dbReference type="PDB" id="4MYH">
    <property type="method" value="X-ray"/>
    <property type="resolution" value="3.38 A"/>
    <property type="chains" value="A/B/C=98-690"/>
</dbReference>
<dbReference type="PDB" id="7PSL">
    <property type="method" value="EM"/>
    <property type="resolution" value="3.30 A"/>
    <property type="chains" value="A/B=92-690"/>
</dbReference>
<dbReference type="PDB" id="7PSM">
    <property type="method" value="EM"/>
    <property type="resolution" value="3.40 A"/>
    <property type="chains" value="A/B=92-690"/>
</dbReference>
<dbReference type="PDB" id="7PSN">
    <property type="method" value="EM"/>
    <property type="resolution" value="2.90 A"/>
    <property type="chains" value="A/B=92-690"/>
</dbReference>
<dbReference type="PDBsum" id="4MYC"/>
<dbReference type="PDBsum" id="4MYH"/>
<dbReference type="PDBsum" id="7PSL"/>
<dbReference type="PDBsum" id="7PSM"/>
<dbReference type="PDBsum" id="7PSN"/>
<dbReference type="EMDB" id="EMD-13613"/>
<dbReference type="EMDB" id="EMD-13614"/>
<dbReference type="EMDB" id="EMD-13615"/>
<dbReference type="SMR" id="P40416"/>
<dbReference type="BioGRID" id="35481">
    <property type="interactions" value="101"/>
</dbReference>
<dbReference type="DIP" id="DIP-7617N"/>
<dbReference type="FunCoup" id="P40416">
    <property type="interactions" value="763"/>
</dbReference>
<dbReference type="IntAct" id="P40416">
    <property type="interactions" value="8"/>
</dbReference>
<dbReference type="MINT" id="P40416"/>
<dbReference type="STRING" id="4932.YMR301C"/>
<dbReference type="TCDB" id="3.A.1.210.1">
    <property type="family name" value="the atp-binding cassette (abc) superfamily"/>
</dbReference>
<dbReference type="iPTMnet" id="P40416"/>
<dbReference type="PaxDb" id="4932-YMR301C"/>
<dbReference type="PeptideAtlas" id="P40416"/>
<dbReference type="EnsemblFungi" id="YMR301C_mRNA">
    <property type="protein sequence ID" value="YMR301C"/>
    <property type="gene ID" value="YMR301C"/>
</dbReference>
<dbReference type="GeneID" id="855347"/>
<dbReference type="KEGG" id="sce:YMR301C"/>
<dbReference type="AGR" id="SGD:S000004916"/>
<dbReference type="SGD" id="S000004916">
    <property type="gene designation" value="ATM1"/>
</dbReference>
<dbReference type="VEuPathDB" id="FungiDB:YMR301C"/>
<dbReference type="eggNOG" id="KOG0057">
    <property type="taxonomic scope" value="Eukaryota"/>
</dbReference>
<dbReference type="GeneTree" id="ENSGT00940000156281"/>
<dbReference type="HOGENOM" id="CLU_000604_84_1_1"/>
<dbReference type="InParanoid" id="P40416"/>
<dbReference type="OMA" id="VFHIIPI"/>
<dbReference type="OrthoDB" id="6500128at2759"/>
<dbReference type="BioCyc" id="YEAST:G3O-32967-MONOMER"/>
<dbReference type="Reactome" id="R-SCE-1369007">
    <property type="pathway name" value="Mitochondrial ABC transporters"/>
</dbReference>
<dbReference type="BioGRID-ORCS" id="855347">
    <property type="hits" value="8 hits in 10 CRISPR screens"/>
</dbReference>
<dbReference type="EvolutionaryTrace" id="P40416"/>
<dbReference type="PRO" id="PR:P40416"/>
<dbReference type="Proteomes" id="UP000002311">
    <property type="component" value="Chromosome XIII"/>
</dbReference>
<dbReference type="RNAct" id="P40416">
    <property type="molecule type" value="protein"/>
</dbReference>
<dbReference type="GO" id="GO:0005743">
    <property type="term" value="C:mitochondrial inner membrane"/>
    <property type="evidence" value="ECO:0000314"/>
    <property type="project" value="SGD"/>
</dbReference>
<dbReference type="GO" id="GO:0005739">
    <property type="term" value="C:mitochondrion"/>
    <property type="evidence" value="ECO:0007005"/>
    <property type="project" value="SGD"/>
</dbReference>
<dbReference type="GO" id="GO:0140359">
    <property type="term" value="F:ABC-type transporter activity"/>
    <property type="evidence" value="ECO:0007669"/>
    <property type="project" value="InterPro"/>
</dbReference>
<dbReference type="GO" id="GO:0005524">
    <property type="term" value="F:ATP binding"/>
    <property type="evidence" value="ECO:0007669"/>
    <property type="project" value="UniProtKB-KW"/>
</dbReference>
<dbReference type="GO" id="GO:0016887">
    <property type="term" value="F:ATP hydrolysis activity"/>
    <property type="evidence" value="ECO:0000314"/>
    <property type="project" value="UniProtKB"/>
</dbReference>
<dbReference type="GO" id="GO:0042626">
    <property type="term" value="F:ATPase-coupled transmembrane transporter activity"/>
    <property type="evidence" value="ECO:0000314"/>
    <property type="project" value="SGD"/>
</dbReference>
<dbReference type="GO" id="GO:0006879">
    <property type="term" value="P:intracellular iron ion homeostasis"/>
    <property type="evidence" value="ECO:0000318"/>
    <property type="project" value="GO_Central"/>
</dbReference>
<dbReference type="GO" id="GO:0016226">
    <property type="term" value="P:iron-sulfur cluster assembly"/>
    <property type="evidence" value="ECO:0000315"/>
    <property type="project" value="UniProtKB"/>
</dbReference>
<dbReference type="GO" id="GO:0140466">
    <property type="term" value="P:iron-sulfur cluster export from the mitochondrion"/>
    <property type="evidence" value="ECO:0000315"/>
    <property type="project" value="UniProtKB"/>
</dbReference>
<dbReference type="GO" id="GO:1902497">
    <property type="term" value="P:iron-sulfur cluster transmembrane transport"/>
    <property type="evidence" value="ECO:0000315"/>
    <property type="project" value="UniProtKB"/>
</dbReference>
<dbReference type="GO" id="GO:1990542">
    <property type="term" value="P:mitochondrial transmembrane transport"/>
    <property type="evidence" value="ECO:0000314"/>
    <property type="project" value="UniProtKB"/>
</dbReference>
<dbReference type="GO" id="GO:0055085">
    <property type="term" value="P:transmembrane transport"/>
    <property type="evidence" value="ECO:0000318"/>
    <property type="project" value="GO_Central"/>
</dbReference>
<dbReference type="CDD" id="cd18582">
    <property type="entry name" value="ABC_6TM_ATM1_ABCB7"/>
    <property type="match status" value="1"/>
</dbReference>
<dbReference type="CDD" id="cd03253">
    <property type="entry name" value="ABCC_ATM1_transporter"/>
    <property type="match status" value="1"/>
</dbReference>
<dbReference type="FunFam" id="1.20.1560.10:FF:000004">
    <property type="entry name" value="ATP-binding cassette sub-family B member 7"/>
    <property type="match status" value="1"/>
</dbReference>
<dbReference type="FunFam" id="3.40.50.300:FF:000287">
    <property type="entry name" value="Multidrug ABC transporter ATP-binding protein"/>
    <property type="match status" value="1"/>
</dbReference>
<dbReference type="Gene3D" id="1.20.1560.10">
    <property type="entry name" value="ABC transporter type 1, transmembrane domain"/>
    <property type="match status" value="1"/>
</dbReference>
<dbReference type="Gene3D" id="3.40.50.300">
    <property type="entry name" value="P-loop containing nucleotide triphosphate hydrolases"/>
    <property type="match status" value="1"/>
</dbReference>
<dbReference type="InterPro" id="IPR003593">
    <property type="entry name" value="AAA+_ATPase"/>
</dbReference>
<dbReference type="InterPro" id="IPR011527">
    <property type="entry name" value="ABC1_TM_dom"/>
</dbReference>
<dbReference type="InterPro" id="IPR036640">
    <property type="entry name" value="ABC1_TM_sf"/>
</dbReference>
<dbReference type="InterPro" id="IPR003439">
    <property type="entry name" value="ABC_transporter-like_ATP-bd"/>
</dbReference>
<dbReference type="InterPro" id="IPR017871">
    <property type="entry name" value="ABC_transporter-like_CS"/>
</dbReference>
<dbReference type="InterPro" id="IPR027417">
    <property type="entry name" value="P-loop_NTPase"/>
</dbReference>
<dbReference type="InterPro" id="IPR039421">
    <property type="entry name" value="Type_1_exporter"/>
</dbReference>
<dbReference type="PANTHER" id="PTHR24221">
    <property type="entry name" value="ATP-BINDING CASSETTE SUB-FAMILY B"/>
    <property type="match status" value="1"/>
</dbReference>
<dbReference type="PANTHER" id="PTHR24221:SF402">
    <property type="entry name" value="IRON-SULFUR CLUSTERS TRANSPORTER ABCB7, MITOCHONDRIAL"/>
    <property type="match status" value="1"/>
</dbReference>
<dbReference type="Pfam" id="PF00664">
    <property type="entry name" value="ABC_membrane"/>
    <property type="match status" value="1"/>
</dbReference>
<dbReference type="Pfam" id="PF00005">
    <property type="entry name" value="ABC_tran"/>
    <property type="match status" value="1"/>
</dbReference>
<dbReference type="SMART" id="SM00382">
    <property type="entry name" value="AAA"/>
    <property type="match status" value="1"/>
</dbReference>
<dbReference type="SUPFAM" id="SSF90123">
    <property type="entry name" value="ABC transporter transmembrane region"/>
    <property type="match status" value="1"/>
</dbReference>
<dbReference type="SUPFAM" id="SSF52540">
    <property type="entry name" value="P-loop containing nucleoside triphosphate hydrolases"/>
    <property type="match status" value="1"/>
</dbReference>
<dbReference type="PROSITE" id="PS50929">
    <property type="entry name" value="ABC_TM1F"/>
    <property type="match status" value="1"/>
</dbReference>
<dbReference type="PROSITE" id="PS00211">
    <property type="entry name" value="ABC_TRANSPORTER_1"/>
    <property type="match status" value="1"/>
</dbReference>
<dbReference type="PROSITE" id="PS50893">
    <property type="entry name" value="ABC_TRANSPORTER_2"/>
    <property type="match status" value="1"/>
</dbReference>
<feature type="transit peptide" description="Mitochondrion" evidence="3">
    <location>
        <begin position="1"/>
        <end position="26"/>
    </location>
</feature>
<feature type="chain" id="PRO_0000000258" description="Iron-sulfur clusters transporter ATM1, mitochondrial">
    <location>
        <begin position="27"/>
        <end position="690"/>
    </location>
</feature>
<feature type="topological domain" description="Mitochondrial matrix" evidence="9 10">
    <location>
        <begin position="27"/>
        <end position="110"/>
    </location>
</feature>
<feature type="transmembrane region" description="Helical" evidence="3">
    <location>
        <begin position="111"/>
        <end position="132"/>
    </location>
</feature>
<feature type="topological domain" description="Mitochondrial intermembrane" evidence="9 10">
    <location>
        <begin position="133"/>
        <end position="155"/>
    </location>
</feature>
<feature type="transmembrane region" description="Helical" evidence="3">
    <location>
        <begin position="156"/>
        <end position="179"/>
    </location>
</feature>
<feature type="topological domain" description="Mitochondrial matrix" evidence="9 10">
    <location>
        <begin position="180"/>
        <end position="228"/>
    </location>
</feature>
<feature type="transmembrane region" description="Helical" evidence="3">
    <location>
        <begin position="229"/>
        <end position="252"/>
    </location>
</feature>
<feature type="topological domain" description="Mitochondrial intermembrane" evidence="9 10">
    <location>
        <position position="253"/>
    </location>
</feature>
<feature type="transmembrane region" description="Helical" evidence="3">
    <location>
        <begin position="254"/>
        <end position="274"/>
    </location>
</feature>
<feature type="topological domain" description="Mitochondrial matrix" evidence="9 10">
    <location>
        <begin position="275"/>
        <end position="340"/>
    </location>
</feature>
<feature type="transmembrane region" description="Helical" evidence="3">
    <location>
        <begin position="341"/>
        <end position="359"/>
    </location>
</feature>
<feature type="topological domain" description="Mitochondrial intermembrane" evidence="9 10">
    <location>
        <begin position="360"/>
        <end position="374"/>
    </location>
</feature>
<feature type="transmembrane region" description="Helical" evidence="3">
    <location>
        <begin position="375"/>
        <end position="396"/>
    </location>
</feature>
<feature type="topological domain" description="Mitochondrial matrix" evidence="9 10">
    <location>
        <begin position="397"/>
        <end position="690"/>
    </location>
</feature>
<feature type="domain" description="ABC transmembrane type-1" evidence="5">
    <location>
        <begin position="111"/>
        <end position="401"/>
    </location>
</feature>
<feature type="domain" description="ABC transporter" evidence="4">
    <location>
        <begin position="436"/>
        <end position="672"/>
    </location>
</feature>
<feature type="binding site" evidence="9 15">
    <location>
        <begin position="280"/>
        <end position="284"/>
    </location>
    <ligand>
        <name>glutathione</name>
        <dbReference type="ChEBI" id="CHEBI:57925"/>
    </ligand>
</feature>
<feature type="binding site" evidence="9 15">
    <location>
        <begin position="343"/>
        <end position="346"/>
    </location>
    <ligand>
        <name>glutathione</name>
        <dbReference type="ChEBI" id="CHEBI:57925"/>
    </ligand>
</feature>
<feature type="binding site" evidence="1">
    <location>
        <position position="393"/>
    </location>
    <ligand>
        <name>glutathione</name>
        <dbReference type="ChEBI" id="CHEBI:57925"/>
    </ligand>
</feature>
<feature type="binding site" evidence="2">
    <location>
        <position position="445"/>
    </location>
    <ligand>
        <name>ATP</name>
        <dbReference type="ChEBI" id="CHEBI:30616"/>
    </ligand>
</feature>
<feature type="binding site" evidence="4">
    <location>
        <begin position="469"/>
        <end position="480"/>
    </location>
    <ligand>
        <name>ATP</name>
        <dbReference type="ChEBI" id="CHEBI:30616"/>
    </ligand>
</feature>
<feature type="mutagenesis site" description="Decreases ATP hydrolysis. Decreases transporter activity." evidence="10">
    <original>R</original>
    <variation>Q</variation>
    <location>
        <position position="216"/>
    </location>
</feature>
<feature type="mutagenesis site" description="Loss of function; significant decrease in ATP-binding; no homodimerization." evidence="8">
    <original>K</original>
    <variation>M</variation>
    <location>
        <position position="475"/>
    </location>
</feature>
<feature type="mutagenesis site" description="Decreases ATP hydrolysis. Decreases transporter activity." evidence="10">
    <location>
        <position position="475"/>
    </location>
</feature>
<feature type="mutagenesis site" description="Loss of function; slight decrease in ATP-binding." evidence="8">
    <original>E</original>
    <variation>A</variation>
    <location>
        <position position="598"/>
    </location>
</feature>
<feature type="mutagenesis site" description="Impairs protein stability." evidence="9">
    <location>
        <begin position="666"/>
        <end position="690"/>
    </location>
</feature>
<feature type="sequence conflict" description="In Ref. 1; CAA57938." evidence="13" ref="1">
    <original>I</original>
    <variation>IRNHS</variation>
    <location>
        <position position="23"/>
    </location>
</feature>
<feature type="helix" evidence="19">
    <location>
        <begin position="94"/>
        <end position="99"/>
    </location>
</feature>
<feature type="helix" evidence="19">
    <location>
        <begin position="105"/>
        <end position="139"/>
    </location>
</feature>
<feature type="strand" evidence="18">
    <location>
        <begin position="146"/>
        <end position="148"/>
    </location>
</feature>
<feature type="helix" evidence="19">
    <location>
        <begin position="152"/>
        <end position="200"/>
    </location>
</feature>
<feature type="helix" evidence="19">
    <location>
        <begin position="204"/>
        <end position="207"/>
    </location>
</feature>
<feature type="helix" evidence="19">
    <location>
        <begin position="211"/>
        <end position="232"/>
    </location>
</feature>
<feature type="turn" evidence="19">
    <location>
        <begin position="233"/>
        <end position="236"/>
    </location>
</feature>
<feature type="helix" evidence="19">
    <location>
        <begin position="237"/>
        <end position="252"/>
    </location>
</feature>
<feature type="helix" evidence="19">
    <location>
        <begin position="257"/>
        <end position="303"/>
    </location>
</feature>
<feature type="helix" evidence="19">
    <location>
        <begin position="305"/>
        <end position="309"/>
    </location>
</feature>
<feature type="turn" evidence="19">
    <location>
        <begin position="310"/>
        <end position="312"/>
    </location>
</feature>
<feature type="helix" evidence="19">
    <location>
        <begin position="314"/>
        <end position="366"/>
    </location>
</feature>
<feature type="strand" evidence="17">
    <location>
        <begin position="367"/>
        <end position="370"/>
    </location>
</feature>
<feature type="helix" evidence="19">
    <location>
        <begin position="372"/>
        <end position="395"/>
    </location>
</feature>
<feature type="helix" evidence="19">
    <location>
        <begin position="400"/>
        <end position="413"/>
    </location>
</feature>
<feature type="strand" evidence="16">
    <location>
        <begin position="430"/>
        <end position="432"/>
    </location>
</feature>
<feature type="strand" evidence="19">
    <location>
        <begin position="436"/>
        <end position="443"/>
    </location>
</feature>
<feature type="strand" evidence="18">
    <location>
        <begin position="445"/>
        <end position="448"/>
    </location>
</feature>
<feature type="strand" evidence="19">
    <location>
        <begin position="451"/>
        <end position="459"/>
    </location>
</feature>
<feature type="strand" evidence="19">
    <location>
        <begin position="461"/>
        <end position="468"/>
    </location>
</feature>
<feature type="strand" evidence="19">
    <location>
        <begin position="473"/>
        <end position="475"/>
    </location>
</feature>
<feature type="helix" evidence="19">
    <location>
        <begin position="476"/>
        <end position="482"/>
    </location>
</feature>
<feature type="strand" evidence="19">
    <location>
        <begin position="489"/>
        <end position="495"/>
    </location>
</feature>
<feature type="helix" evidence="19">
    <location>
        <begin position="500"/>
        <end position="502"/>
    </location>
</feature>
<feature type="helix" evidence="19">
    <location>
        <begin position="505"/>
        <end position="508"/>
    </location>
</feature>
<feature type="strand" evidence="19">
    <location>
        <begin position="511"/>
        <end position="515"/>
    </location>
</feature>
<feature type="strand" evidence="16">
    <location>
        <begin position="523"/>
        <end position="525"/>
    </location>
</feature>
<feature type="helix" evidence="19">
    <location>
        <begin position="526"/>
        <end position="530"/>
    </location>
</feature>
<feature type="helix" evidence="16">
    <location>
        <begin position="531"/>
        <end position="533"/>
    </location>
</feature>
<feature type="helix" evidence="19">
    <location>
        <begin position="539"/>
        <end position="548"/>
    </location>
</feature>
<feature type="helix" evidence="19">
    <location>
        <begin position="552"/>
        <end position="557"/>
    </location>
</feature>
<feature type="turn" evidence="19">
    <location>
        <begin position="559"/>
        <end position="563"/>
    </location>
</feature>
<feature type="strand" evidence="16">
    <location>
        <begin position="565"/>
        <end position="567"/>
    </location>
</feature>
<feature type="helix" evidence="19">
    <location>
        <begin position="568"/>
        <end position="570"/>
    </location>
</feature>
<feature type="helix" evidence="19">
    <location>
        <begin position="575"/>
        <end position="589"/>
    </location>
</feature>
<feature type="strand" evidence="19">
    <location>
        <begin position="592"/>
        <end position="598"/>
    </location>
</feature>
<feature type="strand" evidence="19">
    <location>
        <begin position="601"/>
        <end position="603"/>
    </location>
</feature>
<feature type="helix" evidence="19">
    <location>
        <begin position="605"/>
        <end position="616"/>
    </location>
</feature>
<feature type="turn" evidence="19">
    <location>
        <begin position="621"/>
        <end position="623"/>
    </location>
</feature>
<feature type="strand" evidence="19">
    <location>
        <begin position="625"/>
        <end position="629"/>
    </location>
</feature>
<feature type="helix" evidence="19">
    <location>
        <begin position="633"/>
        <end position="635"/>
    </location>
</feature>
<feature type="strand" evidence="19">
    <location>
        <begin position="640"/>
        <end position="646"/>
    </location>
</feature>
<feature type="strand" evidence="19">
    <location>
        <begin position="649"/>
        <end position="654"/>
    </location>
</feature>
<feature type="helix" evidence="19">
    <location>
        <begin position="656"/>
        <end position="660"/>
    </location>
</feature>
<feature type="helix" evidence="19">
    <location>
        <begin position="666"/>
        <end position="675"/>
    </location>
</feature>
<evidence type="ECO:0000250" key="1">
    <source>
        <dbReference type="UniProtKB" id="Q2G506"/>
    </source>
</evidence>
<evidence type="ECO:0000250" key="2">
    <source>
        <dbReference type="UniProtKB" id="Q9NP58"/>
    </source>
</evidence>
<evidence type="ECO:0000255" key="3"/>
<evidence type="ECO:0000255" key="4">
    <source>
        <dbReference type="PROSITE-ProRule" id="PRU00434"/>
    </source>
</evidence>
<evidence type="ECO:0000255" key="5">
    <source>
        <dbReference type="PROSITE-ProRule" id="PRU00441"/>
    </source>
</evidence>
<evidence type="ECO:0000269" key="6">
    <source>
    </source>
</evidence>
<evidence type="ECO:0000269" key="7">
    <source>
    </source>
</evidence>
<evidence type="ECO:0000269" key="8">
    <source>
    </source>
</evidence>
<evidence type="ECO:0000269" key="9">
    <source>
    </source>
</evidence>
<evidence type="ECO:0000269" key="10">
    <source>
    </source>
</evidence>
<evidence type="ECO:0000269" key="11">
    <source>
    </source>
</evidence>
<evidence type="ECO:0000269" key="12">
    <source>
    </source>
</evidence>
<evidence type="ECO:0000305" key="13"/>
<evidence type="ECO:0000312" key="14">
    <source>
        <dbReference type="SGD" id="S000004916"/>
    </source>
</evidence>
<evidence type="ECO:0007744" key="15">
    <source>
        <dbReference type="PDB" id="4MYH"/>
    </source>
</evidence>
<evidence type="ECO:0007829" key="16">
    <source>
        <dbReference type="PDB" id="4MYC"/>
    </source>
</evidence>
<evidence type="ECO:0007829" key="17">
    <source>
        <dbReference type="PDB" id="4MYH"/>
    </source>
</evidence>
<evidence type="ECO:0007829" key="18">
    <source>
        <dbReference type="PDB" id="7PSM"/>
    </source>
</evidence>
<evidence type="ECO:0007829" key="19">
    <source>
        <dbReference type="PDB" id="7PSN"/>
    </source>
</evidence>
<name>ATM1_YEAST</name>
<sequence length="690" mass="77522">MLLLPRCPVIGRIVRSKFRSGLIRNHSPVIFTVSKLSTQRPLLFNSAVNLWNQAQKDITHKKSVEQFSSAPKVKTQVKKTSKAPTLSELKILKDLFRYIWPKGNNKVRIRVLIALGLLISAKILNVQVPFFFKQTIDSMNIAWDDPTVALPAAIGLTILCYGVARFGSVLFGELRNAVFAKVAQNAIRTVSLQTFQHLMKLDLGWHLSRQTGGLTRAMDRGTKGISQVLTAMVFHIIPISFEISVVCGILTYQFGASFAAITFSTMLLYSIFTIKTTAWRTHFRRDANKADNKAASVALDSLINFEAVKYFNNEKYLADKYNGSLMNYRDSQIKVSQSLAFLNSGQNLIFTTALTAMMYMGCTGVIGGNLTVGDLVLINQLVFQLSVPLNFLGSVYRDLKQSLIDMETLFKLRKNEVKIKNAERPLMLPENVPYDITFENVTFGYHPDRKILKNASFTIPAGWKTAIVGSSGSGKSTILKLVFRFYDPESGRILINGRDIKEYDIDALRKVIGVVPQDTPLFNDTIWENVKFGRIDATDEEVITVVEKAQLAPLIKKLPQGFDTIVGERGLMISGGEKQRLAIARVLLKNARIMFFDEATSALDTHTEQALLRTIRDNFTSGSRTSVYIAHRLRTIADADKIIVLDNGRVREEGKHLELLAMPGSLYRELWTIQEDLDHLENELKDQQEL</sequence>